<protein>
    <recommendedName>
        <fullName evidence="1">Tryptophan synthase beta chain</fullName>
        <ecNumber evidence="1">4.2.1.20</ecNumber>
    </recommendedName>
</protein>
<evidence type="ECO:0000255" key="1">
    <source>
        <dbReference type="HAMAP-Rule" id="MF_00133"/>
    </source>
</evidence>
<feature type="chain" id="PRO_1000198748" description="Tryptophan synthase beta chain">
    <location>
        <begin position="1"/>
        <end position="406"/>
    </location>
</feature>
<feature type="modified residue" description="N6-(pyridoxal phosphate)lysine" evidence="1">
    <location>
        <position position="99"/>
    </location>
</feature>
<proteinExistence type="inferred from homology"/>
<accession>B8I9V8</accession>
<name>TRPB_METNO</name>
<dbReference type="EC" id="4.2.1.20" evidence="1"/>
<dbReference type="EMBL" id="CP001349">
    <property type="protein sequence ID" value="ACL57186.1"/>
    <property type="molecule type" value="Genomic_DNA"/>
</dbReference>
<dbReference type="RefSeq" id="WP_015928872.1">
    <property type="nucleotide sequence ID" value="NC_011894.1"/>
</dbReference>
<dbReference type="SMR" id="B8I9V8"/>
<dbReference type="STRING" id="460265.Mnod_2204"/>
<dbReference type="KEGG" id="mno:Mnod_2204"/>
<dbReference type="eggNOG" id="COG0133">
    <property type="taxonomic scope" value="Bacteria"/>
</dbReference>
<dbReference type="HOGENOM" id="CLU_016734_3_1_5"/>
<dbReference type="OrthoDB" id="9766131at2"/>
<dbReference type="UniPathway" id="UPA00035">
    <property type="reaction ID" value="UER00044"/>
</dbReference>
<dbReference type="Proteomes" id="UP000008207">
    <property type="component" value="Chromosome"/>
</dbReference>
<dbReference type="GO" id="GO:0005737">
    <property type="term" value="C:cytoplasm"/>
    <property type="evidence" value="ECO:0007669"/>
    <property type="project" value="TreeGrafter"/>
</dbReference>
<dbReference type="GO" id="GO:0004834">
    <property type="term" value="F:tryptophan synthase activity"/>
    <property type="evidence" value="ECO:0007669"/>
    <property type="project" value="UniProtKB-UniRule"/>
</dbReference>
<dbReference type="CDD" id="cd06446">
    <property type="entry name" value="Trp-synth_B"/>
    <property type="match status" value="1"/>
</dbReference>
<dbReference type="FunFam" id="3.40.50.1100:FF:000001">
    <property type="entry name" value="Tryptophan synthase beta chain"/>
    <property type="match status" value="1"/>
</dbReference>
<dbReference type="FunFam" id="3.40.50.1100:FF:000004">
    <property type="entry name" value="Tryptophan synthase beta chain"/>
    <property type="match status" value="1"/>
</dbReference>
<dbReference type="Gene3D" id="3.40.50.1100">
    <property type="match status" value="2"/>
</dbReference>
<dbReference type="HAMAP" id="MF_00133">
    <property type="entry name" value="Trp_synth_beta"/>
    <property type="match status" value="1"/>
</dbReference>
<dbReference type="InterPro" id="IPR006653">
    <property type="entry name" value="Trp_synth_b_CS"/>
</dbReference>
<dbReference type="InterPro" id="IPR006654">
    <property type="entry name" value="Trp_synth_beta"/>
</dbReference>
<dbReference type="InterPro" id="IPR023026">
    <property type="entry name" value="Trp_synth_beta/beta-like"/>
</dbReference>
<dbReference type="InterPro" id="IPR001926">
    <property type="entry name" value="TrpB-like_PALP"/>
</dbReference>
<dbReference type="InterPro" id="IPR036052">
    <property type="entry name" value="TrpB-like_PALP_sf"/>
</dbReference>
<dbReference type="NCBIfam" id="TIGR00263">
    <property type="entry name" value="trpB"/>
    <property type="match status" value="1"/>
</dbReference>
<dbReference type="PANTHER" id="PTHR48077:SF3">
    <property type="entry name" value="TRYPTOPHAN SYNTHASE"/>
    <property type="match status" value="1"/>
</dbReference>
<dbReference type="PANTHER" id="PTHR48077">
    <property type="entry name" value="TRYPTOPHAN SYNTHASE-RELATED"/>
    <property type="match status" value="1"/>
</dbReference>
<dbReference type="Pfam" id="PF00291">
    <property type="entry name" value="PALP"/>
    <property type="match status" value="1"/>
</dbReference>
<dbReference type="PIRSF" id="PIRSF001413">
    <property type="entry name" value="Trp_syn_beta"/>
    <property type="match status" value="1"/>
</dbReference>
<dbReference type="SUPFAM" id="SSF53686">
    <property type="entry name" value="Tryptophan synthase beta subunit-like PLP-dependent enzymes"/>
    <property type="match status" value="1"/>
</dbReference>
<dbReference type="PROSITE" id="PS00168">
    <property type="entry name" value="TRP_SYNTHASE_BETA"/>
    <property type="match status" value="1"/>
</dbReference>
<sequence>MTAPQTPNSFRTGPDERGRFGIFGGRFVAETLMPNILELERAYAEAKADPAFQAEMDSYLTHYVGRPSPLYFAERMSAHFGGAKIYFKREELNHTGSHKVNNVLGQILLARRMGKPRIIAETGAGQHGVATATLCARFGLKCVVYMGAVDVERQKPNVFRMKMLGAEVVPVQSGTRTLKDAMNEALRDWVTNVADTFYCIGTVAGPHPYPAMVRDFQAVIGRETKEQMLALEGRLPNSLVACIGGGSNAMGLFHPFLDDREVEIYGVEAAGRGVSTGLHAASLTGGRPGVLHGNRTYLLMNEDGQIADAHSISAGLDYPGIGPEHAWLHEMGRVTYLSATDQETLEAFRLCSLLEGIIPALEPAHALAKVAELAPTKPRDHLMVVNLSGRGDKDIPQVAEILGDAL</sequence>
<organism>
    <name type="scientific">Methylobacterium nodulans (strain LMG 21967 / CNCM I-2342 / ORS 2060)</name>
    <dbReference type="NCBI Taxonomy" id="460265"/>
    <lineage>
        <taxon>Bacteria</taxon>
        <taxon>Pseudomonadati</taxon>
        <taxon>Pseudomonadota</taxon>
        <taxon>Alphaproteobacteria</taxon>
        <taxon>Hyphomicrobiales</taxon>
        <taxon>Methylobacteriaceae</taxon>
        <taxon>Methylobacterium</taxon>
    </lineage>
</organism>
<keyword id="KW-0028">Amino-acid biosynthesis</keyword>
<keyword id="KW-0057">Aromatic amino acid biosynthesis</keyword>
<keyword id="KW-0456">Lyase</keyword>
<keyword id="KW-0663">Pyridoxal phosphate</keyword>
<keyword id="KW-1185">Reference proteome</keyword>
<keyword id="KW-0822">Tryptophan biosynthesis</keyword>
<gene>
    <name evidence="1" type="primary">trpB</name>
    <name type="ordered locus">Mnod_2204</name>
</gene>
<reference key="1">
    <citation type="submission" date="2009-01" db="EMBL/GenBank/DDBJ databases">
        <title>Complete sequence of chromosome of Methylobacterium nodulans ORS 2060.</title>
        <authorList>
            <consortium name="US DOE Joint Genome Institute"/>
            <person name="Lucas S."/>
            <person name="Copeland A."/>
            <person name="Lapidus A."/>
            <person name="Glavina del Rio T."/>
            <person name="Dalin E."/>
            <person name="Tice H."/>
            <person name="Bruce D."/>
            <person name="Goodwin L."/>
            <person name="Pitluck S."/>
            <person name="Sims D."/>
            <person name="Brettin T."/>
            <person name="Detter J.C."/>
            <person name="Han C."/>
            <person name="Larimer F."/>
            <person name="Land M."/>
            <person name="Hauser L."/>
            <person name="Kyrpides N."/>
            <person name="Ivanova N."/>
            <person name="Marx C.J."/>
            <person name="Richardson P."/>
        </authorList>
    </citation>
    <scope>NUCLEOTIDE SEQUENCE [LARGE SCALE GENOMIC DNA]</scope>
    <source>
        <strain>LMG 21967 / CNCM I-2342 / ORS 2060</strain>
    </source>
</reference>
<comment type="function">
    <text evidence="1">The beta subunit is responsible for the synthesis of L-tryptophan from indole and L-serine.</text>
</comment>
<comment type="catalytic activity">
    <reaction evidence="1">
        <text>(1S,2R)-1-C-(indol-3-yl)glycerol 3-phosphate + L-serine = D-glyceraldehyde 3-phosphate + L-tryptophan + H2O</text>
        <dbReference type="Rhea" id="RHEA:10532"/>
        <dbReference type="ChEBI" id="CHEBI:15377"/>
        <dbReference type="ChEBI" id="CHEBI:33384"/>
        <dbReference type="ChEBI" id="CHEBI:57912"/>
        <dbReference type="ChEBI" id="CHEBI:58866"/>
        <dbReference type="ChEBI" id="CHEBI:59776"/>
        <dbReference type="EC" id="4.2.1.20"/>
    </reaction>
</comment>
<comment type="cofactor">
    <cofactor evidence="1">
        <name>pyridoxal 5'-phosphate</name>
        <dbReference type="ChEBI" id="CHEBI:597326"/>
    </cofactor>
</comment>
<comment type="pathway">
    <text evidence="1">Amino-acid biosynthesis; L-tryptophan biosynthesis; L-tryptophan from chorismate: step 5/5.</text>
</comment>
<comment type="subunit">
    <text evidence="1">Tetramer of two alpha and two beta chains.</text>
</comment>
<comment type="similarity">
    <text evidence="1">Belongs to the TrpB family.</text>
</comment>